<name>KATG_SERP5</name>
<dbReference type="EC" id="1.11.1.21" evidence="1"/>
<dbReference type="EMBL" id="CP000826">
    <property type="protein sequence ID" value="ABV42290.1"/>
    <property type="molecule type" value="Genomic_DNA"/>
</dbReference>
<dbReference type="SMR" id="A8GGQ0"/>
<dbReference type="STRING" id="399741.Spro_3192"/>
<dbReference type="PeroxiBase" id="7335">
    <property type="entry name" value="SprCP01"/>
</dbReference>
<dbReference type="KEGG" id="spe:Spro_3192"/>
<dbReference type="eggNOG" id="COG0376">
    <property type="taxonomic scope" value="Bacteria"/>
</dbReference>
<dbReference type="HOGENOM" id="CLU_025424_2_0_6"/>
<dbReference type="OrthoDB" id="9759743at2"/>
<dbReference type="GO" id="GO:0005829">
    <property type="term" value="C:cytosol"/>
    <property type="evidence" value="ECO:0007669"/>
    <property type="project" value="TreeGrafter"/>
</dbReference>
<dbReference type="GO" id="GO:0004096">
    <property type="term" value="F:catalase activity"/>
    <property type="evidence" value="ECO:0007669"/>
    <property type="project" value="UniProtKB-UniRule"/>
</dbReference>
<dbReference type="GO" id="GO:0020037">
    <property type="term" value="F:heme binding"/>
    <property type="evidence" value="ECO:0007669"/>
    <property type="project" value="InterPro"/>
</dbReference>
<dbReference type="GO" id="GO:0046872">
    <property type="term" value="F:metal ion binding"/>
    <property type="evidence" value="ECO:0007669"/>
    <property type="project" value="UniProtKB-KW"/>
</dbReference>
<dbReference type="GO" id="GO:0070301">
    <property type="term" value="P:cellular response to hydrogen peroxide"/>
    <property type="evidence" value="ECO:0007669"/>
    <property type="project" value="TreeGrafter"/>
</dbReference>
<dbReference type="GO" id="GO:0042744">
    <property type="term" value="P:hydrogen peroxide catabolic process"/>
    <property type="evidence" value="ECO:0007669"/>
    <property type="project" value="UniProtKB-KW"/>
</dbReference>
<dbReference type="CDD" id="cd00649">
    <property type="entry name" value="catalase_peroxidase_1"/>
    <property type="match status" value="1"/>
</dbReference>
<dbReference type="CDD" id="cd08200">
    <property type="entry name" value="catalase_peroxidase_2"/>
    <property type="match status" value="1"/>
</dbReference>
<dbReference type="FunFam" id="1.10.420.10:FF:000002">
    <property type="entry name" value="Catalase-peroxidase"/>
    <property type="match status" value="1"/>
</dbReference>
<dbReference type="FunFam" id="1.10.420.10:FF:000004">
    <property type="entry name" value="Catalase-peroxidase"/>
    <property type="match status" value="1"/>
</dbReference>
<dbReference type="FunFam" id="1.10.520.10:FF:000002">
    <property type="entry name" value="Catalase-peroxidase"/>
    <property type="match status" value="1"/>
</dbReference>
<dbReference type="Gene3D" id="1.10.520.10">
    <property type="match status" value="2"/>
</dbReference>
<dbReference type="Gene3D" id="1.10.420.10">
    <property type="entry name" value="Peroxidase, domain 2"/>
    <property type="match status" value="2"/>
</dbReference>
<dbReference type="HAMAP" id="MF_01961">
    <property type="entry name" value="Catal_peroxid"/>
    <property type="match status" value="1"/>
</dbReference>
<dbReference type="InterPro" id="IPR000763">
    <property type="entry name" value="Catalase_peroxidase"/>
</dbReference>
<dbReference type="InterPro" id="IPR002016">
    <property type="entry name" value="Haem_peroxidase"/>
</dbReference>
<dbReference type="InterPro" id="IPR010255">
    <property type="entry name" value="Haem_peroxidase_sf"/>
</dbReference>
<dbReference type="InterPro" id="IPR019794">
    <property type="entry name" value="Peroxidases_AS"/>
</dbReference>
<dbReference type="InterPro" id="IPR019793">
    <property type="entry name" value="Peroxidases_heam-ligand_BS"/>
</dbReference>
<dbReference type="NCBIfam" id="TIGR00198">
    <property type="entry name" value="cat_per_HPI"/>
    <property type="match status" value="1"/>
</dbReference>
<dbReference type="NCBIfam" id="NF011635">
    <property type="entry name" value="PRK15061.1"/>
    <property type="match status" value="1"/>
</dbReference>
<dbReference type="PANTHER" id="PTHR30555:SF0">
    <property type="entry name" value="CATALASE-PEROXIDASE"/>
    <property type="match status" value="1"/>
</dbReference>
<dbReference type="PANTHER" id="PTHR30555">
    <property type="entry name" value="HYDROPEROXIDASE I, BIFUNCTIONAL CATALASE-PEROXIDASE"/>
    <property type="match status" value="1"/>
</dbReference>
<dbReference type="Pfam" id="PF00141">
    <property type="entry name" value="peroxidase"/>
    <property type="match status" value="2"/>
</dbReference>
<dbReference type="PRINTS" id="PR00460">
    <property type="entry name" value="BPEROXIDASE"/>
</dbReference>
<dbReference type="PRINTS" id="PR00458">
    <property type="entry name" value="PEROXIDASE"/>
</dbReference>
<dbReference type="SUPFAM" id="SSF48113">
    <property type="entry name" value="Heme-dependent peroxidases"/>
    <property type="match status" value="2"/>
</dbReference>
<dbReference type="PROSITE" id="PS00435">
    <property type="entry name" value="PEROXIDASE_1"/>
    <property type="match status" value="1"/>
</dbReference>
<dbReference type="PROSITE" id="PS00436">
    <property type="entry name" value="PEROXIDASE_2"/>
    <property type="match status" value="1"/>
</dbReference>
<dbReference type="PROSITE" id="PS50873">
    <property type="entry name" value="PEROXIDASE_4"/>
    <property type="match status" value="1"/>
</dbReference>
<feature type="chain" id="PRO_0000354912" description="Catalase-peroxidase">
    <location>
        <begin position="1"/>
        <end position="732"/>
    </location>
</feature>
<feature type="region of interest" description="Disordered" evidence="2">
    <location>
        <begin position="1"/>
        <end position="29"/>
    </location>
</feature>
<feature type="active site" description="Proton acceptor" evidence="1">
    <location>
        <position position="97"/>
    </location>
</feature>
<feature type="binding site" description="axial binding residue" evidence="1">
    <location>
        <position position="264"/>
    </location>
    <ligand>
        <name>heme b</name>
        <dbReference type="ChEBI" id="CHEBI:60344"/>
    </ligand>
    <ligandPart>
        <name>Fe</name>
        <dbReference type="ChEBI" id="CHEBI:18248"/>
    </ligandPart>
</feature>
<feature type="site" description="Transition state stabilizer" evidence="1">
    <location>
        <position position="93"/>
    </location>
</feature>
<feature type="cross-link" description="Tryptophyl-tyrosyl-methioninium (Trp-Tyr) (with M-249)" evidence="1">
    <location>
        <begin position="96"/>
        <end position="223"/>
    </location>
</feature>
<feature type="cross-link" description="Tryptophyl-tyrosyl-methioninium (Tyr-Met) (with W-96)" evidence="1">
    <location>
        <begin position="223"/>
        <end position="249"/>
    </location>
</feature>
<gene>
    <name evidence="1" type="primary">katG</name>
    <name type="ordered locus">Spro_3192</name>
</gene>
<evidence type="ECO:0000255" key="1">
    <source>
        <dbReference type="HAMAP-Rule" id="MF_01961"/>
    </source>
</evidence>
<evidence type="ECO:0000256" key="2">
    <source>
        <dbReference type="SAM" id="MobiDB-lite"/>
    </source>
</evidence>
<comment type="function">
    <text evidence="1">Bifunctional enzyme with both catalase and broad-spectrum peroxidase activity.</text>
</comment>
<comment type="catalytic activity">
    <reaction evidence="1">
        <text>H2O2 + AH2 = A + 2 H2O</text>
        <dbReference type="Rhea" id="RHEA:30275"/>
        <dbReference type="ChEBI" id="CHEBI:13193"/>
        <dbReference type="ChEBI" id="CHEBI:15377"/>
        <dbReference type="ChEBI" id="CHEBI:16240"/>
        <dbReference type="ChEBI" id="CHEBI:17499"/>
        <dbReference type="EC" id="1.11.1.21"/>
    </reaction>
</comment>
<comment type="catalytic activity">
    <reaction evidence="1">
        <text>2 H2O2 = O2 + 2 H2O</text>
        <dbReference type="Rhea" id="RHEA:20309"/>
        <dbReference type="ChEBI" id="CHEBI:15377"/>
        <dbReference type="ChEBI" id="CHEBI:15379"/>
        <dbReference type="ChEBI" id="CHEBI:16240"/>
        <dbReference type="EC" id="1.11.1.21"/>
    </reaction>
</comment>
<comment type="cofactor">
    <cofactor evidence="1">
        <name>heme b</name>
        <dbReference type="ChEBI" id="CHEBI:60344"/>
    </cofactor>
    <text evidence="1">Binds 1 heme b (iron(II)-protoporphyrin IX) group per dimer.</text>
</comment>
<comment type="subunit">
    <text evidence="1">Homodimer or homotetramer.</text>
</comment>
<comment type="PTM">
    <text evidence="1">Formation of the three residue Trp-Tyr-Met cross-link is important for the catalase, but not the peroxidase activity of the enzyme.</text>
</comment>
<comment type="similarity">
    <text evidence="1">Belongs to the peroxidase family. Peroxidase/catalase subfamily.</text>
</comment>
<protein>
    <recommendedName>
        <fullName evidence="1">Catalase-peroxidase</fullName>
        <shortName evidence="1">CP</shortName>
        <ecNumber evidence="1">1.11.1.21</ecNumber>
    </recommendedName>
    <alternativeName>
        <fullName evidence="1">Peroxidase/catalase</fullName>
    </alternativeName>
</protein>
<reference key="1">
    <citation type="submission" date="2007-09" db="EMBL/GenBank/DDBJ databases">
        <title>Complete sequence of chromosome of Serratia proteamaculans 568.</title>
        <authorList>
            <consortium name="US DOE Joint Genome Institute"/>
            <person name="Copeland A."/>
            <person name="Lucas S."/>
            <person name="Lapidus A."/>
            <person name="Barry K."/>
            <person name="Glavina del Rio T."/>
            <person name="Dalin E."/>
            <person name="Tice H."/>
            <person name="Pitluck S."/>
            <person name="Chain P."/>
            <person name="Malfatti S."/>
            <person name="Shin M."/>
            <person name="Vergez L."/>
            <person name="Schmutz J."/>
            <person name="Larimer F."/>
            <person name="Land M."/>
            <person name="Hauser L."/>
            <person name="Kyrpides N."/>
            <person name="Kim E."/>
            <person name="Taghavi S."/>
            <person name="Newman L."/>
            <person name="Vangronsveld J."/>
            <person name="van der Lelie D."/>
            <person name="Richardson P."/>
        </authorList>
    </citation>
    <scope>NUCLEOTIDE SEQUENCE [LARGE SCALE GENOMIC DNA]</scope>
    <source>
        <strain>568</strain>
    </source>
</reference>
<accession>A8GGQ0</accession>
<keyword id="KW-0349">Heme</keyword>
<keyword id="KW-0376">Hydrogen peroxide</keyword>
<keyword id="KW-0408">Iron</keyword>
<keyword id="KW-0479">Metal-binding</keyword>
<keyword id="KW-0560">Oxidoreductase</keyword>
<keyword id="KW-0575">Peroxidase</keyword>
<proteinExistence type="inferred from homology"/>
<sequence length="732" mass="80366">MTTESKCPFSGGGKPNTPRRGPSNQDWWPNQLSLKPLHQHSSLSDPMDPDFDYAKAFNSLDLAAVKQDLHALMTDSQEWWPADFGHYGGLFIRMAWHSAGTYRIGDGRGGAGEGQQRFAPLNSWPDNVSLDKARRLLWPIKQKYGRKISWADLIVLTGNVALESMGFKTFGYAGGRADTWEPDDVYWGSEKIWLELSGGQNSRYSGDRDLEDPLAAVQMGLIYVNPEGPDGNPDPVAAARDIRETFARMAMNDEETVALIAGGHTFGKTHGAGPASHVGDDPETAGLERQGLGWQSSFGTGKGKDAITSGLEVTWTTTPTQWNHDFFKHLFEYEWELTQSPAGAHQWVAKDVGETIPDAFDPAKKQRPTMLTTDLSLRFDPAYEKISRRFYEHPDQLADAFSRAWYKLTHRDMGPRARYLGPEVPAEELIWQDPIPAVDHQLINDQDIADLKTSILTSGLPISVLVSTAWASASTFRGSDKRGGANGARIRLAPQKDWAINQPAQLAQTLAKLEDIQQAFNNAQSGNKRVSLADLIVLAGAAAVEQAAANAGHPVSVPFTPGRMDATQEQTDVDSFEAMEPVADGFRNYLERQFNIPAEALLVDKAQLLTLTAPEMTVLVGGLRVLNANVGQSQHGVLTQRPQALSNDFFVNLLDMGTTWKAAGEDGVFEGQDSQTGALKWTATRADLIFGSHSQLRALAEVYGSSDAQASFVYDFVAAWNKVMNLDRFDLA</sequence>
<organism>
    <name type="scientific">Serratia proteamaculans (strain 568)</name>
    <dbReference type="NCBI Taxonomy" id="399741"/>
    <lineage>
        <taxon>Bacteria</taxon>
        <taxon>Pseudomonadati</taxon>
        <taxon>Pseudomonadota</taxon>
        <taxon>Gammaproteobacteria</taxon>
        <taxon>Enterobacterales</taxon>
        <taxon>Yersiniaceae</taxon>
        <taxon>Serratia</taxon>
    </lineage>
</organism>